<evidence type="ECO:0000255" key="1">
    <source>
        <dbReference type="HAMAP-Rule" id="MF_01694"/>
    </source>
</evidence>
<evidence type="ECO:0000255" key="2">
    <source>
        <dbReference type="PROSITE-ProRule" id="PRU01266"/>
    </source>
</evidence>
<feature type="chain" id="PRO_0000381716" description="Biotin synthase">
    <location>
        <begin position="1"/>
        <end position="341"/>
    </location>
</feature>
<feature type="domain" description="Radical SAM core" evidence="2">
    <location>
        <begin position="40"/>
        <end position="267"/>
    </location>
</feature>
<feature type="binding site" evidence="1">
    <location>
        <position position="55"/>
    </location>
    <ligand>
        <name>[4Fe-4S] cluster</name>
        <dbReference type="ChEBI" id="CHEBI:49883"/>
        <note>4Fe-4S-S-AdoMet</note>
    </ligand>
</feature>
<feature type="binding site" evidence="1">
    <location>
        <position position="59"/>
    </location>
    <ligand>
        <name>[4Fe-4S] cluster</name>
        <dbReference type="ChEBI" id="CHEBI:49883"/>
        <note>4Fe-4S-S-AdoMet</note>
    </ligand>
</feature>
<feature type="binding site" evidence="1">
    <location>
        <position position="62"/>
    </location>
    <ligand>
        <name>[4Fe-4S] cluster</name>
        <dbReference type="ChEBI" id="CHEBI:49883"/>
        <note>4Fe-4S-S-AdoMet</note>
    </ligand>
</feature>
<feature type="binding site" evidence="1">
    <location>
        <position position="99"/>
    </location>
    <ligand>
        <name>[2Fe-2S] cluster</name>
        <dbReference type="ChEBI" id="CHEBI:190135"/>
    </ligand>
</feature>
<feature type="binding site" evidence="1">
    <location>
        <position position="130"/>
    </location>
    <ligand>
        <name>[2Fe-2S] cluster</name>
        <dbReference type="ChEBI" id="CHEBI:190135"/>
    </ligand>
</feature>
<feature type="binding site" evidence="1">
    <location>
        <position position="190"/>
    </location>
    <ligand>
        <name>[2Fe-2S] cluster</name>
        <dbReference type="ChEBI" id="CHEBI:190135"/>
    </ligand>
</feature>
<feature type="binding site" evidence="1">
    <location>
        <position position="262"/>
    </location>
    <ligand>
        <name>[2Fe-2S] cluster</name>
        <dbReference type="ChEBI" id="CHEBI:190135"/>
    </ligand>
</feature>
<comment type="function">
    <text evidence="1">Catalyzes the conversion of dethiobiotin (DTB) to biotin by the insertion of a sulfur atom into dethiobiotin via a radical-based mechanism.</text>
</comment>
<comment type="catalytic activity">
    <reaction evidence="1">
        <text>(4R,5S)-dethiobiotin + (sulfur carrier)-SH + 2 reduced [2Fe-2S]-[ferredoxin] + 2 S-adenosyl-L-methionine = (sulfur carrier)-H + biotin + 2 5'-deoxyadenosine + 2 L-methionine + 2 oxidized [2Fe-2S]-[ferredoxin]</text>
        <dbReference type="Rhea" id="RHEA:22060"/>
        <dbReference type="Rhea" id="RHEA-COMP:10000"/>
        <dbReference type="Rhea" id="RHEA-COMP:10001"/>
        <dbReference type="Rhea" id="RHEA-COMP:14737"/>
        <dbReference type="Rhea" id="RHEA-COMP:14739"/>
        <dbReference type="ChEBI" id="CHEBI:17319"/>
        <dbReference type="ChEBI" id="CHEBI:29917"/>
        <dbReference type="ChEBI" id="CHEBI:33737"/>
        <dbReference type="ChEBI" id="CHEBI:33738"/>
        <dbReference type="ChEBI" id="CHEBI:57586"/>
        <dbReference type="ChEBI" id="CHEBI:57844"/>
        <dbReference type="ChEBI" id="CHEBI:59789"/>
        <dbReference type="ChEBI" id="CHEBI:64428"/>
        <dbReference type="ChEBI" id="CHEBI:149473"/>
        <dbReference type="EC" id="2.8.1.6"/>
    </reaction>
</comment>
<comment type="cofactor">
    <cofactor evidence="1">
        <name>[4Fe-4S] cluster</name>
        <dbReference type="ChEBI" id="CHEBI:49883"/>
    </cofactor>
    <text evidence="1">Binds 1 [4Fe-4S] cluster. The cluster is coordinated with 3 cysteines and an exchangeable S-adenosyl-L-methionine.</text>
</comment>
<comment type="cofactor">
    <cofactor evidence="1">
        <name>[2Fe-2S] cluster</name>
        <dbReference type="ChEBI" id="CHEBI:190135"/>
    </cofactor>
    <text evidence="1">Binds 1 [2Fe-2S] cluster. The cluster is coordinated with 3 cysteines and 1 arginine.</text>
</comment>
<comment type="pathway">
    <text evidence="1">Cofactor biosynthesis; biotin biosynthesis; biotin from 7,8-diaminononanoate: step 2/2.</text>
</comment>
<comment type="subunit">
    <text evidence="1">Homodimer.</text>
</comment>
<comment type="similarity">
    <text evidence="1">Belongs to the radical SAM superfamily. Biotin synthase family.</text>
</comment>
<keyword id="KW-0001">2Fe-2S</keyword>
<keyword id="KW-0004">4Fe-4S</keyword>
<keyword id="KW-0093">Biotin biosynthesis</keyword>
<keyword id="KW-0408">Iron</keyword>
<keyword id="KW-0411">Iron-sulfur</keyword>
<keyword id="KW-0479">Metal-binding</keyword>
<keyword id="KW-0949">S-adenosyl-L-methionine</keyword>
<keyword id="KW-0808">Transferase</keyword>
<dbReference type="EC" id="2.8.1.6" evidence="1"/>
<dbReference type="EMBL" id="AE003849">
    <property type="protein sequence ID" value="AAF82877.1"/>
    <property type="molecule type" value="Genomic_DNA"/>
</dbReference>
<dbReference type="PIR" id="D82852">
    <property type="entry name" value="D82852"/>
</dbReference>
<dbReference type="RefSeq" id="WP_010892613.1">
    <property type="nucleotide sequence ID" value="NC_002488.3"/>
</dbReference>
<dbReference type="SMR" id="Q9PH80"/>
<dbReference type="STRING" id="160492.XF_0064"/>
<dbReference type="KEGG" id="xfa:XF_0064"/>
<dbReference type="eggNOG" id="COG0502">
    <property type="taxonomic scope" value="Bacteria"/>
</dbReference>
<dbReference type="HOGENOM" id="CLU_033172_1_2_6"/>
<dbReference type="UniPathway" id="UPA00078">
    <property type="reaction ID" value="UER00162"/>
</dbReference>
<dbReference type="Proteomes" id="UP000000812">
    <property type="component" value="Chromosome"/>
</dbReference>
<dbReference type="GO" id="GO:0051537">
    <property type="term" value="F:2 iron, 2 sulfur cluster binding"/>
    <property type="evidence" value="ECO:0007669"/>
    <property type="project" value="UniProtKB-KW"/>
</dbReference>
<dbReference type="GO" id="GO:0051539">
    <property type="term" value="F:4 iron, 4 sulfur cluster binding"/>
    <property type="evidence" value="ECO:0007669"/>
    <property type="project" value="UniProtKB-KW"/>
</dbReference>
<dbReference type="GO" id="GO:0004076">
    <property type="term" value="F:biotin synthase activity"/>
    <property type="evidence" value="ECO:0007669"/>
    <property type="project" value="UniProtKB-UniRule"/>
</dbReference>
<dbReference type="GO" id="GO:0005506">
    <property type="term" value="F:iron ion binding"/>
    <property type="evidence" value="ECO:0007669"/>
    <property type="project" value="UniProtKB-UniRule"/>
</dbReference>
<dbReference type="GO" id="GO:0009102">
    <property type="term" value="P:biotin biosynthetic process"/>
    <property type="evidence" value="ECO:0007669"/>
    <property type="project" value="UniProtKB-UniRule"/>
</dbReference>
<dbReference type="CDD" id="cd01335">
    <property type="entry name" value="Radical_SAM"/>
    <property type="match status" value="1"/>
</dbReference>
<dbReference type="FunFam" id="3.20.20.70:FF:000011">
    <property type="entry name" value="Biotin synthase"/>
    <property type="match status" value="1"/>
</dbReference>
<dbReference type="Gene3D" id="3.20.20.70">
    <property type="entry name" value="Aldolase class I"/>
    <property type="match status" value="1"/>
</dbReference>
<dbReference type="HAMAP" id="MF_01694">
    <property type="entry name" value="BioB"/>
    <property type="match status" value="1"/>
</dbReference>
<dbReference type="InterPro" id="IPR013785">
    <property type="entry name" value="Aldolase_TIM"/>
</dbReference>
<dbReference type="InterPro" id="IPR010722">
    <property type="entry name" value="BATS_dom"/>
</dbReference>
<dbReference type="InterPro" id="IPR002684">
    <property type="entry name" value="Biotin_synth/BioAB"/>
</dbReference>
<dbReference type="InterPro" id="IPR024177">
    <property type="entry name" value="Biotin_synthase"/>
</dbReference>
<dbReference type="InterPro" id="IPR006638">
    <property type="entry name" value="Elp3/MiaA/NifB-like_rSAM"/>
</dbReference>
<dbReference type="InterPro" id="IPR007197">
    <property type="entry name" value="rSAM"/>
</dbReference>
<dbReference type="NCBIfam" id="TIGR00433">
    <property type="entry name" value="bioB"/>
    <property type="match status" value="1"/>
</dbReference>
<dbReference type="PANTHER" id="PTHR22976">
    <property type="entry name" value="BIOTIN SYNTHASE"/>
    <property type="match status" value="1"/>
</dbReference>
<dbReference type="PANTHER" id="PTHR22976:SF2">
    <property type="entry name" value="BIOTIN SYNTHASE, MITOCHONDRIAL"/>
    <property type="match status" value="1"/>
</dbReference>
<dbReference type="Pfam" id="PF06968">
    <property type="entry name" value="BATS"/>
    <property type="match status" value="1"/>
</dbReference>
<dbReference type="Pfam" id="PF04055">
    <property type="entry name" value="Radical_SAM"/>
    <property type="match status" value="1"/>
</dbReference>
<dbReference type="PIRSF" id="PIRSF001619">
    <property type="entry name" value="Biotin_synth"/>
    <property type="match status" value="1"/>
</dbReference>
<dbReference type="SFLD" id="SFLDF00272">
    <property type="entry name" value="biotin_synthase"/>
    <property type="match status" value="1"/>
</dbReference>
<dbReference type="SFLD" id="SFLDS00029">
    <property type="entry name" value="Radical_SAM"/>
    <property type="match status" value="1"/>
</dbReference>
<dbReference type="SMART" id="SM00876">
    <property type="entry name" value="BATS"/>
    <property type="match status" value="1"/>
</dbReference>
<dbReference type="SMART" id="SM00729">
    <property type="entry name" value="Elp3"/>
    <property type="match status" value="1"/>
</dbReference>
<dbReference type="SUPFAM" id="SSF102114">
    <property type="entry name" value="Radical SAM enzymes"/>
    <property type="match status" value="1"/>
</dbReference>
<dbReference type="PROSITE" id="PS51918">
    <property type="entry name" value="RADICAL_SAM"/>
    <property type="match status" value="1"/>
</dbReference>
<accession>Q9PH80</accession>
<reference key="1">
    <citation type="journal article" date="2000" name="Nature">
        <title>The genome sequence of the plant pathogen Xylella fastidiosa.</title>
        <authorList>
            <person name="Simpson A.J.G."/>
            <person name="Reinach F.C."/>
            <person name="Arruda P."/>
            <person name="Abreu F.A."/>
            <person name="Acencio M."/>
            <person name="Alvarenga R."/>
            <person name="Alves L.M.C."/>
            <person name="Araya J.E."/>
            <person name="Baia G.S."/>
            <person name="Baptista C.S."/>
            <person name="Barros M.H."/>
            <person name="Bonaccorsi E.D."/>
            <person name="Bordin S."/>
            <person name="Bove J.M."/>
            <person name="Briones M.R.S."/>
            <person name="Bueno M.R.P."/>
            <person name="Camargo A.A."/>
            <person name="Camargo L.E.A."/>
            <person name="Carraro D.M."/>
            <person name="Carrer H."/>
            <person name="Colauto N.B."/>
            <person name="Colombo C."/>
            <person name="Costa F.F."/>
            <person name="Costa M.C.R."/>
            <person name="Costa-Neto C.M."/>
            <person name="Coutinho L.L."/>
            <person name="Cristofani M."/>
            <person name="Dias-Neto E."/>
            <person name="Docena C."/>
            <person name="El-Dorry H."/>
            <person name="Facincani A.P."/>
            <person name="Ferreira A.J.S."/>
            <person name="Ferreira V.C.A."/>
            <person name="Ferro J.A."/>
            <person name="Fraga J.S."/>
            <person name="Franca S.C."/>
            <person name="Franco M.C."/>
            <person name="Frohme M."/>
            <person name="Furlan L.R."/>
            <person name="Garnier M."/>
            <person name="Goldman G.H."/>
            <person name="Goldman M.H.S."/>
            <person name="Gomes S.L."/>
            <person name="Gruber A."/>
            <person name="Ho P.L."/>
            <person name="Hoheisel J.D."/>
            <person name="Junqueira M.L."/>
            <person name="Kemper E.L."/>
            <person name="Kitajima J.P."/>
            <person name="Krieger J.E."/>
            <person name="Kuramae E.E."/>
            <person name="Laigret F."/>
            <person name="Lambais M.R."/>
            <person name="Leite L.C.C."/>
            <person name="Lemos E.G.M."/>
            <person name="Lemos M.V.F."/>
            <person name="Lopes S.A."/>
            <person name="Lopes C.R."/>
            <person name="Machado J.A."/>
            <person name="Machado M.A."/>
            <person name="Madeira A.M.B.N."/>
            <person name="Madeira H.M.F."/>
            <person name="Marino C.L."/>
            <person name="Marques M.V."/>
            <person name="Martins E.A.L."/>
            <person name="Martins E.M.F."/>
            <person name="Matsukuma A.Y."/>
            <person name="Menck C.F.M."/>
            <person name="Miracca E.C."/>
            <person name="Miyaki C.Y."/>
            <person name="Monteiro-Vitorello C.B."/>
            <person name="Moon D.H."/>
            <person name="Nagai M.A."/>
            <person name="Nascimento A.L.T.O."/>
            <person name="Netto L.E.S."/>
            <person name="Nhani A. Jr."/>
            <person name="Nobrega F.G."/>
            <person name="Nunes L.R."/>
            <person name="Oliveira M.A."/>
            <person name="de Oliveira M.C."/>
            <person name="de Oliveira R.C."/>
            <person name="Palmieri D.A."/>
            <person name="Paris A."/>
            <person name="Peixoto B.R."/>
            <person name="Pereira G.A.G."/>
            <person name="Pereira H.A. Jr."/>
            <person name="Pesquero J.B."/>
            <person name="Quaggio R.B."/>
            <person name="Roberto P.G."/>
            <person name="Rodrigues V."/>
            <person name="de Rosa A.J.M."/>
            <person name="de Rosa V.E. Jr."/>
            <person name="de Sa R.G."/>
            <person name="Santelli R.V."/>
            <person name="Sawasaki H.E."/>
            <person name="da Silva A.C.R."/>
            <person name="da Silva A.M."/>
            <person name="da Silva F.R."/>
            <person name="Silva W.A. Jr."/>
            <person name="da Silveira J.F."/>
            <person name="Silvestri M.L.Z."/>
            <person name="Siqueira W.J."/>
            <person name="de Souza A.A."/>
            <person name="de Souza A.P."/>
            <person name="Terenzi M.F."/>
            <person name="Truffi D."/>
            <person name="Tsai S.M."/>
            <person name="Tsuhako M.H."/>
            <person name="Vallada H."/>
            <person name="Van Sluys M.A."/>
            <person name="Verjovski-Almeida S."/>
            <person name="Vettore A.L."/>
            <person name="Zago M.A."/>
            <person name="Zatz M."/>
            <person name="Meidanis J."/>
            <person name="Setubal J.C."/>
        </authorList>
    </citation>
    <scope>NUCLEOTIDE SEQUENCE [LARGE SCALE GENOMIC DNA]</scope>
    <source>
        <strain>9a5c</strain>
    </source>
</reference>
<organism>
    <name type="scientific">Xylella fastidiosa (strain 9a5c)</name>
    <dbReference type="NCBI Taxonomy" id="160492"/>
    <lineage>
        <taxon>Bacteria</taxon>
        <taxon>Pseudomonadati</taxon>
        <taxon>Pseudomonadota</taxon>
        <taxon>Gammaproteobacteria</taxon>
        <taxon>Lysobacterales</taxon>
        <taxon>Lysobacteraceae</taxon>
        <taxon>Xylella</taxon>
    </lineage>
</organism>
<sequence length="341" mass="37674">MSSIIRYDWTAEELHALFDLSLPELLYRAASVHRQHFDPAEIQVSTLLSVKTGGCPEDCSYCPQAQRYDTGVTAQKLMDVDAVVAKARQAKLAGASRFCMGAAWRSPKDRDIPKIAAMIREVKALGLETCATLGMLNTCQAQALKDAGLDYYNHNVDTSPDFYDSVIHTRQYQDRLDTLAHVRDVGLKTCCGGIVGMGETRQHRVGLLLTLATLPAHPDSVPVNLLVQVAGTPLHGTQTLDPFEFVRMIAVARITMPRSMVRLSAGRESMSDELQLLCFMAGANSIFYGEKLLTTANPETERDQALFQRLGLRPMHLMENVSNQDQHHGNVHADIACKHVV</sequence>
<name>BIOB_XYLFA</name>
<protein>
    <recommendedName>
        <fullName evidence="1">Biotin synthase</fullName>
        <ecNumber evidence="1">2.8.1.6</ecNumber>
    </recommendedName>
</protein>
<proteinExistence type="inferred from homology"/>
<gene>
    <name evidence="1" type="primary">bioB</name>
    <name type="ordered locus">XF_0064</name>
</gene>